<protein>
    <recommendedName>
        <fullName evidence="1">Aspartate 1-decarboxylase</fullName>
        <ecNumber evidence="1">4.1.1.11</ecNumber>
    </recommendedName>
    <alternativeName>
        <fullName evidence="1">Aspartate alpha-decarboxylase</fullName>
    </alternativeName>
    <component>
        <recommendedName>
            <fullName evidence="1">Aspartate 1-decarboxylase beta chain</fullName>
        </recommendedName>
    </component>
    <component>
        <recommendedName>
            <fullName evidence="1">Aspartate 1-decarboxylase alpha chain</fullName>
        </recommendedName>
    </component>
</protein>
<dbReference type="EC" id="4.1.1.11" evidence="1"/>
<dbReference type="EMBL" id="AM933173">
    <property type="protein sequence ID" value="CAR36091.1"/>
    <property type="molecule type" value="Genomic_DNA"/>
</dbReference>
<dbReference type="RefSeq" id="WP_000621526.1">
    <property type="nucleotide sequence ID" value="NC_011274.1"/>
</dbReference>
<dbReference type="SMR" id="B5RHB9"/>
<dbReference type="GeneID" id="89550440"/>
<dbReference type="KEGG" id="seg:SG0184"/>
<dbReference type="HOGENOM" id="CLU_115305_2_1_6"/>
<dbReference type="UniPathway" id="UPA00028">
    <property type="reaction ID" value="UER00002"/>
</dbReference>
<dbReference type="Proteomes" id="UP000008321">
    <property type="component" value="Chromosome"/>
</dbReference>
<dbReference type="GO" id="GO:0005829">
    <property type="term" value="C:cytosol"/>
    <property type="evidence" value="ECO:0007669"/>
    <property type="project" value="TreeGrafter"/>
</dbReference>
<dbReference type="GO" id="GO:0004068">
    <property type="term" value="F:aspartate 1-decarboxylase activity"/>
    <property type="evidence" value="ECO:0007669"/>
    <property type="project" value="UniProtKB-UniRule"/>
</dbReference>
<dbReference type="GO" id="GO:0006523">
    <property type="term" value="P:alanine biosynthetic process"/>
    <property type="evidence" value="ECO:0007669"/>
    <property type="project" value="InterPro"/>
</dbReference>
<dbReference type="GO" id="GO:0015940">
    <property type="term" value="P:pantothenate biosynthetic process"/>
    <property type="evidence" value="ECO:0007669"/>
    <property type="project" value="UniProtKB-UniRule"/>
</dbReference>
<dbReference type="CDD" id="cd06919">
    <property type="entry name" value="Asp_decarbox"/>
    <property type="match status" value="1"/>
</dbReference>
<dbReference type="FunFam" id="2.40.40.20:FF:000004">
    <property type="entry name" value="Aspartate 1-decarboxylase"/>
    <property type="match status" value="1"/>
</dbReference>
<dbReference type="Gene3D" id="2.40.40.20">
    <property type="match status" value="1"/>
</dbReference>
<dbReference type="HAMAP" id="MF_00446">
    <property type="entry name" value="PanD"/>
    <property type="match status" value="1"/>
</dbReference>
<dbReference type="InterPro" id="IPR009010">
    <property type="entry name" value="Asp_de-COase-like_dom_sf"/>
</dbReference>
<dbReference type="InterPro" id="IPR003190">
    <property type="entry name" value="Asp_decarbox"/>
</dbReference>
<dbReference type="NCBIfam" id="TIGR00223">
    <property type="entry name" value="panD"/>
    <property type="match status" value="1"/>
</dbReference>
<dbReference type="PANTHER" id="PTHR21012">
    <property type="entry name" value="ASPARTATE 1-DECARBOXYLASE"/>
    <property type="match status" value="1"/>
</dbReference>
<dbReference type="PANTHER" id="PTHR21012:SF0">
    <property type="entry name" value="ASPARTATE 1-DECARBOXYLASE"/>
    <property type="match status" value="1"/>
</dbReference>
<dbReference type="Pfam" id="PF02261">
    <property type="entry name" value="Asp_decarbox"/>
    <property type="match status" value="1"/>
</dbReference>
<dbReference type="PIRSF" id="PIRSF006246">
    <property type="entry name" value="Asp_decarbox"/>
    <property type="match status" value="1"/>
</dbReference>
<dbReference type="SUPFAM" id="SSF50692">
    <property type="entry name" value="ADC-like"/>
    <property type="match status" value="1"/>
</dbReference>
<gene>
    <name evidence="1" type="primary">panD</name>
    <name type="ordered locus">SG0184</name>
</gene>
<name>PAND_SALG2</name>
<evidence type="ECO:0000255" key="1">
    <source>
        <dbReference type="HAMAP-Rule" id="MF_00446"/>
    </source>
</evidence>
<feature type="chain" id="PRO_1000192029" description="Aspartate 1-decarboxylase beta chain" evidence="1">
    <location>
        <begin position="1"/>
        <end position="24"/>
    </location>
</feature>
<feature type="chain" id="PRO_1000192030" description="Aspartate 1-decarboxylase alpha chain" evidence="1">
    <location>
        <begin position="25"/>
        <end position="126"/>
    </location>
</feature>
<feature type="active site" description="Schiff-base intermediate with substrate; via pyruvic acid" evidence="1">
    <location>
        <position position="25"/>
    </location>
</feature>
<feature type="active site" description="Proton donor" evidence="1">
    <location>
        <position position="58"/>
    </location>
</feature>
<feature type="binding site" evidence="1">
    <location>
        <position position="57"/>
    </location>
    <ligand>
        <name>substrate</name>
    </ligand>
</feature>
<feature type="binding site" evidence="1">
    <location>
        <begin position="73"/>
        <end position="75"/>
    </location>
    <ligand>
        <name>substrate</name>
    </ligand>
</feature>
<feature type="modified residue" description="Pyruvic acid (Ser)" evidence="1">
    <location>
        <position position="25"/>
    </location>
</feature>
<accession>B5RHB9</accession>
<sequence length="126" mass="13887">MIRTMLQGKLHRVKVTQADLHYEGSCAIDQDFLDASGILENEAIDIWNVTNGKRFSTYAIAAERGSRIISVNGAAAHCAEVGDIVIIASFVTMSDEEARTWRPKVAYFEGDNEMKRTAKAIPVQVA</sequence>
<organism>
    <name type="scientific">Salmonella gallinarum (strain 287/91 / NCTC 13346)</name>
    <dbReference type="NCBI Taxonomy" id="550538"/>
    <lineage>
        <taxon>Bacteria</taxon>
        <taxon>Pseudomonadati</taxon>
        <taxon>Pseudomonadota</taxon>
        <taxon>Gammaproteobacteria</taxon>
        <taxon>Enterobacterales</taxon>
        <taxon>Enterobacteriaceae</taxon>
        <taxon>Salmonella</taxon>
    </lineage>
</organism>
<proteinExistence type="inferred from homology"/>
<comment type="function">
    <text evidence="1">Catalyzes the pyruvoyl-dependent decarboxylation of aspartate to produce beta-alanine.</text>
</comment>
<comment type="catalytic activity">
    <reaction evidence="1">
        <text>L-aspartate + H(+) = beta-alanine + CO2</text>
        <dbReference type="Rhea" id="RHEA:19497"/>
        <dbReference type="ChEBI" id="CHEBI:15378"/>
        <dbReference type="ChEBI" id="CHEBI:16526"/>
        <dbReference type="ChEBI" id="CHEBI:29991"/>
        <dbReference type="ChEBI" id="CHEBI:57966"/>
        <dbReference type="EC" id="4.1.1.11"/>
    </reaction>
</comment>
<comment type="cofactor">
    <cofactor evidence="1">
        <name>pyruvate</name>
        <dbReference type="ChEBI" id="CHEBI:15361"/>
    </cofactor>
    <text evidence="1">Binds 1 pyruvoyl group covalently per subunit.</text>
</comment>
<comment type="pathway">
    <text evidence="1">Cofactor biosynthesis; (R)-pantothenate biosynthesis; beta-alanine from L-aspartate: step 1/1.</text>
</comment>
<comment type="subunit">
    <text evidence="1">Heterooctamer of four alpha and four beta subunits.</text>
</comment>
<comment type="subcellular location">
    <subcellularLocation>
        <location evidence="1">Cytoplasm</location>
    </subcellularLocation>
</comment>
<comment type="PTM">
    <text evidence="1">Is synthesized initially as an inactive proenzyme, which is activated by self-cleavage at a specific serine bond to produce a beta-subunit with a hydroxyl group at its C-terminus and an alpha-subunit with a pyruvoyl group at its N-terminus.</text>
</comment>
<comment type="similarity">
    <text evidence="1">Belongs to the PanD family.</text>
</comment>
<keyword id="KW-0068">Autocatalytic cleavage</keyword>
<keyword id="KW-0963">Cytoplasm</keyword>
<keyword id="KW-0210">Decarboxylase</keyword>
<keyword id="KW-0456">Lyase</keyword>
<keyword id="KW-0566">Pantothenate biosynthesis</keyword>
<keyword id="KW-0670">Pyruvate</keyword>
<keyword id="KW-0704">Schiff base</keyword>
<keyword id="KW-0865">Zymogen</keyword>
<reference key="1">
    <citation type="journal article" date="2008" name="Genome Res.">
        <title>Comparative genome analysis of Salmonella enteritidis PT4 and Salmonella gallinarum 287/91 provides insights into evolutionary and host adaptation pathways.</title>
        <authorList>
            <person name="Thomson N.R."/>
            <person name="Clayton D.J."/>
            <person name="Windhorst D."/>
            <person name="Vernikos G."/>
            <person name="Davidson S."/>
            <person name="Churcher C."/>
            <person name="Quail M.A."/>
            <person name="Stevens M."/>
            <person name="Jones M.A."/>
            <person name="Watson M."/>
            <person name="Barron A."/>
            <person name="Layton A."/>
            <person name="Pickard D."/>
            <person name="Kingsley R.A."/>
            <person name="Bignell A."/>
            <person name="Clark L."/>
            <person name="Harris B."/>
            <person name="Ormond D."/>
            <person name="Abdellah Z."/>
            <person name="Brooks K."/>
            <person name="Cherevach I."/>
            <person name="Chillingworth T."/>
            <person name="Woodward J."/>
            <person name="Norberczak H."/>
            <person name="Lord A."/>
            <person name="Arrowsmith C."/>
            <person name="Jagels K."/>
            <person name="Moule S."/>
            <person name="Mungall K."/>
            <person name="Saunders M."/>
            <person name="Whitehead S."/>
            <person name="Chabalgoity J.A."/>
            <person name="Maskell D."/>
            <person name="Humphreys T."/>
            <person name="Roberts M."/>
            <person name="Barrow P.A."/>
            <person name="Dougan G."/>
            <person name="Parkhill J."/>
        </authorList>
    </citation>
    <scope>NUCLEOTIDE SEQUENCE [LARGE SCALE GENOMIC DNA]</scope>
    <source>
        <strain>287/91 / NCTC 13346</strain>
    </source>
</reference>